<dbReference type="EC" id="1.1.1.17" evidence="1"/>
<dbReference type="EMBL" id="AP006716">
    <property type="protein sequence ID" value="BAE03541.1"/>
    <property type="molecule type" value="Genomic_DNA"/>
</dbReference>
<dbReference type="RefSeq" id="WP_011274561.1">
    <property type="nucleotide sequence ID" value="NC_007168.1"/>
</dbReference>
<dbReference type="SMR" id="Q4L9Y4"/>
<dbReference type="KEGG" id="sha:SH0232"/>
<dbReference type="eggNOG" id="COG0246">
    <property type="taxonomic scope" value="Bacteria"/>
</dbReference>
<dbReference type="HOGENOM" id="CLU_036089_2_0_9"/>
<dbReference type="OrthoDB" id="271711at2"/>
<dbReference type="Proteomes" id="UP000000543">
    <property type="component" value="Chromosome"/>
</dbReference>
<dbReference type="GO" id="GO:0005829">
    <property type="term" value="C:cytosol"/>
    <property type="evidence" value="ECO:0007669"/>
    <property type="project" value="TreeGrafter"/>
</dbReference>
<dbReference type="GO" id="GO:0008926">
    <property type="term" value="F:mannitol-1-phosphate 5-dehydrogenase activity"/>
    <property type="evidence" value="ECO:0007669"/>
    <property type="project" value="UniProtKB-UniRule"/>
</dbReference>
<dbReference type="GO" id="GO:0019592">
    <property type="term" value="P:mannitol catabolic process"/>
    <property type="evidence" value="ECO:0007669"/>
    <property type="project" value="TreeGrafter"/>
</dbReference>
<dbReference type="Gene3D" id="1.10.1040.10">
    <property type="entry name" value="N-(1-d-carboxylethyl)-l-norvaline Dehydrogenase, domain 2"/>
    <property type="match status" value="1"/>
</dbReference>
<dbReference type="Gene3D" id="3.40.50.720">
    <property type="entry name" value="NAD(P)-binding Rossmann-like Domain"/>
    <property type="match status" value="1"/>
</dbReference>
<dbReference type="HAMAP" id="MF_00196">
    <property type="entry name" value="Mannitol_dehydrog"/>
    <property type="match status" value="1"/>
</dbReference>
<dbReference type="InterPro" id="IPR008927">
    <property type="entry name" value="6-PGluconate_DH-like_C_sf"/>
</dbReference>
<dbReference type="InterPro" id="IPR013328">
    <property type="entry name" value="6PGD_dom2"/>
</dbReference>
<dbReference type="InterPro" id="IPR023028">
    <property type="entry name" value="Mannitol_1_phos_5_DH"/>
</dbReference>
<dbReference type="InterPro" id="IPR000669">
    <property type="entry name" value="Mannitol_DH"/>
</dbReference>
<dbReference type="InterPro" id="IPR013118">
    <property type="entry name" value="Mannitol_DH_C"/>
</dbReference>
<dbReference type="InterPro" id="IPR023027">
    <property type="entry name" value="Mannitol_DH_CS"/>
</dbReference>
<dbReference type="InterPro" id="IPR013131">
    <property type="entry name" value="Mannitol_DH_N"/>
</dbReference>
<dbReference type="InterPro" id="IPR036291">
    <property type="entry name" value="NAD(P)-bd_dom_sf"/>
</dbReference>
<dbReference type="NCBIfam" id="NF002645">
    <property type="entry name" value="PRK02318.1-1"/>
    <property type="match status" value="1"/>
</dbReference>
<dbReference type="NCBIfam" id="NF002652">
    <property type="entry name" value="PRK02318.2-5"/>
    <property type="match status" value="1"/>
</dbReference>
<dbReference type="PANTHER" id="PTHR30524:SF0">
    <property type="entry name" value="ALTRONATE OXIDOREDUCTASE-RELATED"/>
    <property type="match status" value="1"/>
</dbReference>
<dbReference type="PANTHER" id="PTHR30524">
    <property type="entry name" value="MANNITOL-1-PHOSPHATE 5-DEHYDROGENASE"/>
    <property type="match status" value="1"/>
</dbReference>
<dbReference type="Pfam" id="PF01232">
    <property type="entry name" value="Mannitol_dh"/>
    <property type="match status" value="1"/>
</dbReference>
<dbReference type="Pfam" id="PF08125">
    <property type="entry name" value="Mannitol_dh_C"/>
    <property type="match status" value="1"/>
</dbReference>
<dbReference type="PRINTS" id="PR00084">
    <property type="entry name" value="MTLDHDRGNASE"/>
</dbReference>
<dbReference type="SUPFAM" id="SSF48179">
    <property type="entry name" value="6-phosphogluconate dehydrogenase C-terminal domain-like"/>
    <property type="match status" value="1"/>
</dbReference>
<dbReference type="SUPFAM" id="SSF51735">
    <property type="entry name" value="NAD(P)-binding Rossmann-fold domains"/>
    <property type="match status" value="1"/>
</dbReference>
<dbReference type="PROSITE" id="PS00974">
    <property type="entry name" value="MANNITOL_DHGENASE"/>
    <property type="match status" value="1"/>
</dbReference>
<feature type="chain" id="PRO_1000011816" description="Mannitol-1-phosphate 5-dehydrogenase">
    <location>
        <begin position="1"/>
        <end position="367"/>
    </location>
</feature>
<feature type="binding site" evidence="1">
    <location>
        <begin position="3"/>
        <end position="14"/>
    </location>
    <ligand>
        <name>NAD(+)</name>
        <dbReference type="ChEBI" id="CHEBI:57540"/>
    </ligand>
</feature>
<reference key="1">
    <citation type="journal article" date="2005" name="J. Bacteriol.">
        <title>Whole-genome sequencing of Staphylococcus haemolyticus uncovers the extreme plasticity of its genome and the evolution of human-colonizing staphylococcal species.</title>
        <authorList>
            <person name="Takeuchi F."/>
            <person name="Watanabe S."/>
            <person name="Baba T."/>
            <person name="Yuzawa H."/>
            <person name="Ito T."/>
            <person name="Morimoto Y."/>
            <person name="Kuroda M."/>
            <person name="Cui L."/>
            <person name="Takahashi M."/>
            <person name="Ankai A."/>
            <person name="Baba S."/>
            <person name="Fukui S."/>
            <person name="Lee J.C."/>
            <person name="Hiramatsu K."/>
        </authorList>
    </citation>
    <scope>NUCLEOTIDE SEQUENCE [LARGE SCALE GENOMIC DNA]</scope>
    <source>
        <strain>JCSC1435</strain>
    </source>
</reference>
<organism>
    <name type="scientific">Staphylococcus haemolyticus (strain JCSC1435)</name>
    <dbReference type="NCBI Taxonomy" id="279808"/>
    <lineage>
        <taxon>Bacteria</taxon>
        <taxon>Bacillati</taxon>
        <taxon>Bacillota</taxon>
        <taxon>Bacilli</taxon>
        <taxon>Bacillales</taxon>
        <taxon>Staphylococcaceae</taxon>
        <taxon>Staphylococcus</taxon>
    </lineage>
</organism>
<gene>
    <name evidence="1" type="primary">mtlD</name>
    <name type="ordered locus">SH0232</name>
</gene>
<proteinExistence type="inferred from homology"/>
<keyword id="KW-0520">NAD</keyword>
<keyword id="KW-0560">Oxidoreductase</keyword>
<evidence type="ECO:0000255" key="1">
    <source>
        <dbReference type="HAMAP-Rule" id="MF_00196"/>
    </source>
</evidence>
<name>MTLD_STAHJ</name>
<comment type="catalytic activity">
    <reaction evidence="1">
        <text>D-mannitol 1-phosphate + NAD(+) = beta-D-fructose 6-phosphate + NADH + H(+)</text>
        <dbReference type="Rhea" id="RHEA:19661"/>
        <dbReference type="ChEBI" id="CHEBI:15378"/>
        <dbReference type="ChEBI" id="CHEBI:57540"/>
        <dbReference type="ChEBI" id="CHEBI:57634"/>
        <dbReference type="ChEBI" id="CHEBI:57945"/>
        <dbReference type="ChEBI" id="CHEBI:61381"/>
        <dbReference type="EC" id="1.1.1.17"/>
    </reaction>
</comment>
<comment type="similarity">
    <text evidence="1">Belongs to the mannitol dehydrogenase family.</text>
</comment>
<sequence>MKAVHFGAGNIGRGFIGYILSDNNIDVTFADVNEEIINALDNEGAYNVILANEEKTTTRVTGVSAINSGQLSDELKQAILEADIITTAVGVNILPIIAKSFAPVLKEKENHVNIVACENAIMATDTLKEAILDITGPLGDNIHFANSAVDRIVPLQKNDNILDVMVEPFFEWVVEKDAWYGEELEHIKYVDDLTPYIERKLLTVNTGHALLAYAGRFYGRDTVLDAVKDEAIVADLRQVLGETSEYIVDNFSFTKEEQAAYVEKIIGRFENPYLSDEVTRVGRGTIRKIGPKDRIIKPLSYLYENNLRRKGLLKAAALLLKYDDMNDKETIEMREYIDAHGVKAFLQEYAKINDRLADEIVAVYEDL</sequence>
<accession>Q4L9Y4</accession>
<protein>
    <recommendedName>
        <fullName evidence="1">Mannitol-1-phosphate 5-dehydrogenase</fullName>
        <ecNumber evidence="1">1.1.1.17</ecNumber>
    </recommendedName>
</protein>